<accession>Q0I811</accession>
<proteinExistence type="inferred from homology"/>
<reference key="1">
    <citation type="journal article" date="2006" name="Proc. Natl. Acad. Sci. U.S.A.">
        <title>Genome sequence of Synechococcus CC9311: insights into adaptation to a coastal environment.</title>
        <authorList>
            <person name="Palenik B."/>
            <person name="Ren Q."/>
            <person name="Dupont C.L."/>
            <person name="Myers G.S."/>
            <person name="Heidelberg J.F."/>
            <person name="Badger J.H."/>
            <person name="Madupu R."/>
            <person name="Nelson W.C."/>
            <person name="Brinkac L.M."/>
            <person name="Dodson R.J."/>
            <person name="Durkin A.S."/>
            <person name="Daugherty S.C."/>
            <person name="Sullivan S.A."/>
            <person name="Khouri H."/>
            <person name="Mohamoud Y."/>
            <person name="Halpin R."/>
            <person name="Paulsen I.T."/>
        </authorList>
    </citation>
    <scope>NUCLEOTIDE SEQUENCE [LARGE SCALE GENOMIC DNA]</scope>
    <source>
        <strain>CC9311</strain>
    </source>
</reference>
<keyword id="KW-0963">Cytoplasm</keyword>
<keyword id="KW-0441">Lipid A biosynthesis</keyword>
<keyword id="KW-0444">Lipid biosynthesis</keyword>
<keyword id="KW-0443">Lipid metabolism</keyword>
<keyword id="KW-0456">Lyase</keyword>
<keyword id="KW-1185">Reference proteome</keyword>
<gene>
    <name evidence="1" type="primary">fabZ</name>
    <name type="ordered locus">sync_2213</name>
</gene>
<sequence length="154" mass="16831">MTVLASNDPPTAVLNAEQIMGLLPHRYPFALVDRVLEHVPGERAVALKNVTFNEPQFQGHFPGRPLMPGVLIVEAMAQVGGLIVTQMPDLPKGLFVFAGIDGVRFRRPVVPGDQLRITCELLSLKRKRFGKVKAEATVDGQLVCSGELMFSLVD</sequence>
<protein>
    <recommendedName>
        <fullName evidence="1">3-hydroxyacyl-[acyl-carrier-protein] dehydratase FabZ</fullName>
        <ecNumber evidence="1">4.2.1.59</ecNumber>
    </recommendedName>
    <alternativeName>
        <fullName evidence="1">(3R)-hydroxymyristoyl-[acyl-carrier-protein] dehydratase</fullName>
        <shortName evidence="1">(3R)-hydroxymyristoyl-ACP dehydrase</shortName>
    </alternativeName>
    <alternativeName>
        <fullName evidence="1">Beta-hydroxyacyl-ACP dehydratase</fullName>
    </alternativeName>
</protein>
<evidence type="ECO:0000255" key="1">
    <source>
        <dbReference type="HAMAP-Rule" id="MF_00406"/>
    </source>
</evidence>
<organism>
    <name type="scientific">Synechococcus sp. (strain CC9311)</name>
    <dbReference type="NCBI Taxonomy" id="64471"/>
    <lineage>
        <taxon>Bacteria</taxon>
        <taxon>Bacillati</taxon>
        <taxon>Cyanobacteriota</taxon>
        <taxon>Cyanophyceae</taxon>
        <taxon>Synechococcales</taxon>
        <taxon>Synechococcaceae</taxon>
        <taxon>Synechococcus</taxon>
    </lineage>
</organism>
<feature type="chain" id="PRO_0000340809" description="3-hydroxyacyl-[acyl-carrier-protein] dehydratase FabZ">
    <location>
        <begin position="1"/>
        <end position="154"/>
    </location>
</feature>
<feature type="active site" evidence="1">
    <location>
        <position position="60"/>
    </location>
</feature>
<name>FABZ_SYNS3</name>
<comment type="function">
    <text evidence="1">Involved in unsaturated fatty acids biosynthesis. Catalyzes the dehydration of short chain beta-hydroxyacyl-ACPs and long chain saturated and unsaturated beta-hydroxyacyl-ACPs.</text>
</comment>
<comment type="catalytic activity">
    <reaction evidence="1">
        <text>a (3R)-hydroxyacyl-[ACP] = a (2E)-enoyl-[ACP] + H2O</text>
        <dbReference type="Rhea" id="RHEA:13097"/>
        <dbReference type="Rhea" id="RHEA-COMP:9925"/>
        <dbReference type="Rhea" id="RHEA-COMP:9945"/>
        <dbReference type="ChEBI" id="CHEBI:15377"/>
        <dbReference type="ChEBI" id="CHEBI:78784"/>
        <dbReference type="ChEBI" id="CHEBI:78827"/>
        <dbReference type="EC" id="4.2.1.59"/>
    </reaction>
</comment>
<comment type="subcellular location">
    <subcellularLocation>
        <location evidence="1">Cytoplasm</location>
    </subcellularLocation>
</comment>
<comment type="similarity">
    <text evidence="1">Belongs to the thioester dehydratase family. FabZ subfamily.</text>
</comment>
<dbReference type="EC" id="4.2.1.59" evidence="1"/>
<dbReference type="EMBL" id="CP000435">
    <property type="protein sequence ID" value="ABI46200.1"/>
    <property type="molecule type" value="Genomic_DNA"/>
</dbReference>
<dbReference type="SMR" id="Q0I811"/>
<dbReference type="STRING" id="64471.sync_2213"/>
<dbReference type="KEGG" id="syg:sync_2213"/>
<dbReference type="eggNOG" id="COG0764">
    <property type="taxonomic scope" value="Bacteria"/>
</dbReference>
<dbReference type="HOGENOM" id="CLU_078912_3_0_3"/>
<dbReference type="Proteomes" id="UP000001961">
    <property type="component" value="Chromosome"/>
</dbReference>
<dbReference type="GO" id="GO:0005737">
    <property type="term" value="C:cytoplasm"/>
    <property type="evidence" value="ECO:0007669"/>
    <property type="project" value="UniProtKB-SubCell"/>
</dbReference>
<dbReference type="GO" id="GO:0016020">
    <property type="term" value="C:membrane"/>
    <property type="evidence" value="ECO:0007669"/>
    <property type="project" value="GOC"/>
</dbReference>
<dbReference type="GO" id="GO:0019171">
    <property type="term" value="F:(3R)-hydroxyacyl-[acyl-carrier-protein] dehydratase activity"/>
    <property type="evidence" value="ECO:0007669"/>
    <property type="project" value="UniProtKB-EC"/>
</dbReference>
<dbReference type="GO" id="GO:0006633">
    <property type="term" value="P:fatty acid biosynthetic process"/>
    <property type="evidence" value="ECO:0007669"/>
    <property type="project" value="UniProtKB-UniRule"/>
</dbReference>
<dbReference type="GO" id="GO:0009245">
    <property type="term" value="P:lipid A biosynthetic process"/>
    <property type="evidence" value="ECO:0007669"/>
    <property type="project" value="UniProtKB-UniRule"/>
</dbReference>
<dbReference type="CDD" id="cd01288">
    <property type="entry name" value="FabZ"/>
    <property type="match status" value="1"/>
</dbReference>
<dbReference type="FunFam" id="3.10.129.10:FF:000001">
    <property type="entry name" value="3-hydroxyacyl-[acyl-carrier-protein] dehydratase FabZ"/>
    <property type="match status" value="1"/>
</dbReference>
<dbReference type="Gene3D" id="3.10.129.10">
    <property type="entry name" value="Hotdog Thioesterase"/>
    <property type="match status" value="1"/>
</dbReference>
<dbReference type="HAMAP" id="MF_00406">
    <property type="entry name" value="FabZ"/>
    <property type="match status" value="1"/>
</dbReference>
<dbReference type="InterPro" id="IPR013114">
    <property type="entry name" value="FabA_FabZ"/>
</dbReference>
<dbReference type="InterPro" id="IPR010084">
    <property type="entry name" value="FabZ"/>
</dbReference>
<dbReference type="InterPro" id="IPR029069">
    <property type="entry name" value="HotDog_dom_sf"/>
</dbReference>
<dbReference type="NCBIfam" id="TIGR01750">
    <property type="entry name" value="fabZ"/>
    <property type="match status" value="1"/>
</dbReference>
<dbReference type="NCBIfam" id="NF000582">
    <property type="entry name" value="PRK00006.1"/>
    <property type="match status" value="1"/>
</dbReference>
<dbReference type="PANTHER" id="PTHR30272">
    <property type="entry name" value="3-HYDROXYACYL-[ACYL-CARRIER-PROTEIN] DEHYDRATASE"/>
    <property type="match status" value="1"/>
</dbReference>
<dbReference type="PANTHER" id="PTHR30272:SF1">
    <property type="entry name" value="3-HYDROXYACYL-[ACYL-CARRIER-PROTEIN] DEHYDRATASE"/>
    <property type="match status" value="1"/>
</dbReference>
<dbReference type="Pfam" id="PF07977">
    <property type="entry name" value="FabA"/>
    <property type="match status" value="1"/>
</dbReference>
<dbReference type="SUPFAM" id="SSF54637">
    <property type="entry name" value="Thioesterase/thiol ester dehydrase-isomerase"/>
    <property type="match status" value="1"/>
</dbReference>